<reference key="1">
    <citation type="journal article" date="2008" name="BMC Genomics">
        <title>The genome sequence of the fish pathogen Aliivibrio salmonicida strain LFI1238 shows extensive evidence of gene decay.</title>
        <authorList>
            <person name="Hjerde E."/>
            <person name="Lorentzen M.S."/>
            <person name="Holden M.T."/>
            <person name="Seeger K."/>
            <person name="Paulsen S."/>
            <person name="Bason N."/>
            <person name="Churcher C."/>
            <person name="Harris D."/>
            <person name="Norbertczak H."/>
            <person name="Quail M.A."/>
            <person name="Sanders S."/>
            <person name="Thurston S."/>
            <person name="Parkhill J."/>
            <person name="Willassen N.P."/>
            <person name="Thomson N.R."/>
        </authorList>
    </citation>
    <scope>NUCLEOTIDE SEQUENCE [LARGE SCALE GENOMIC DNA]</scope>
    <source>
        <strain>LFI1238</strain>
    </source>
</reference>
<organism>
    <name type="scientific">Aliivibrio salmonicida (strain LFI1238)</name>
    <name type="common">Vibrio salmonicida (strain LFI1238)</name>
    <dbReference type="NCBI Taxonomy" id="316275"/>
    <lineage>
        <taxon>Bacteria</taxon>
        <taxon>Pseudomonadati</taxon>
        <taxon>Pseudomonadota</taxon>
        <taxon>Gammaproteobacteria</taxon>
        <taxon>Vibrionales</taxon>
        <taxon>Vibrionaceae</taxon>
        <taxon>Aliivibrio</taxon>
    </lineage>
</organism>
<feature type="chain" id="PRO_1000100995" description="Large ribosomal subunit protein bL36">
    <location>
        <begin position="1"/>
        <end position="45"/>
    </location>
</feature>
<comment type="similarity">
    <text evidence="1">Belongs to the bacterial ribosomal protein bL36 family.</text>
</comment>
<accession>B6EHZ5</accession>
<proteinExistence type="inferred from homology"/>
<sequence>MKVLSSLKSAKSRHKDCQIVKRKGRVFVICKTNPRFKAVQGKKKK</sequence>
<dbReference type="EMBL" id="FM178379">
    <property type="protein sequence ID" value="CAQ78574.1"/>
    <property type="molecule type" value="Genomic_DNA"/>
</dbReference>
<dbReference type="SMR" id="B6EHZ5"/>
<dbReference type="KEGG" id="vsa:VSAL_I0889"/>
<dbReference type="eggNOG" id="COG0257">
    <property type="taxonomic scope" value="Bacteria"/>
</dbReference>
<dbReference type="HOGENOM" id="CLU_135723_3_1_6"/>
<dbReference type="Proteomes" id="UP000001730">
    <property type="component" value="Chromosome 1"/>
</dbReference>
<dbReference type="GO" id="GO:1990904">
    <property type="term" value="C:ribonucleoprotein complex"/>
    <property type="evidence" value="ECO:0007669"/>
    <property type="project" value="UniProtKB-KW"/>
</dbReference>
<dbReference type="GO" id="GO:0005840">
    <property type="term" value="C:ribosome"/>
    <property type="evidence" value="ECO:0007669"/>
    <property type="project" value="UniProtKB-KW"/>
</dbReference>
<dbReference type="GO" id="GO:0003735">
    <property type="term" value="F:structural constituent of ribosome"/>
    <property type="evidence" value="ECO:0007669"/>
    <property type="project" value="InterPro"/>
</dbReference>
<dbReference type="GO" id="GO:0006412">
    <property type="term" value="P:translation"/>
    <property type="evidence" value="ECO:0007669"/>
    <property type="project" value="UniProtKB-UniRule"/>
</dbReference>
<dbReference type="HAMAP" id="MF_00251">
    <property type="entry name" value="Ribosomal_bL36"/>
    <property type="match status" value="1"/>
</dbReference>
<dbReference type="InterPro" id="IPR000473">
    <property type="entry name" value="Ribosomal_bL36"/>
</dbReference>
<dbReference type="InterPro" id="IPR035977">
    <property type="entry name" value="Ribosomal_bL36_sp"/>
</dbReference>
<dbReference type="InterPro" id="IPR047621">
    <property type="entry name" value="Ribosomal_L36_bact"/>
</dbReference>
<dbReference type="NCBIfam" id="NF002021">
    <property type="entry name" value="PRK00831.1"/>
    <property type="match status" value="1"/>
</dbReference>
<dbReference type="NCBIfam" id="TIGR01022">
    <property type="entry name" value="rpmJ_bact"/>
    <property type="match status" value="1"/>
</dbReference>
<dbReference type="PANTHER" id="PTHR47781">
    <property type="entry name" value="50S RIBOSOMAL PROTEIN L36 2"/>
    <property type="match status" value="1"/>
</dbReference>
<dbReference type="PANTHER" id="PTHR47781:SF1">
    <property type="entry name" value="LARGE RIBOSOMAL SUBUNIT PROTEIN BL36B"/>
    <property type="match status" value="1"/>
</dbReference>
<dbReference type="Pfam" id="PF00444">
    <property type="entry name" value="Ribosomal_L36"/>
    <property type="match status" value="1"/>
</dbReference>
<dbReference type="SUPFAM" id="SSF57840">
    <property type="entry name" value="Ribosomal protein L36"/>
    <property type="match status" value="1"/>
</dbReference>
<dbReference type="PROSITE" id="PS00828">
    <property type="entry name" value="RIBOSOMAL_L36"/>
    <property type="match status" value="1"/>
</dbReference>
<keyword id="KW-0687">Ribonucleoprotein</keyword>
<keyword id="KW-0689">Ribosomal protein</keyword>
<evidence type="ECO:0000255" key="1">
    <source>
        <dbReference type="HAMAP-Rule" id="MF_00251"/>
    </source>
</evidence>
<evidence type="ECO:0000305" key="2"/>
<gene>
    <name evidence="1" type="primary">rpmJ</name>
    <name type="ordered locus">VSAL_I0889</name>
</gene>
<name>RL36_ALISL</name>
<protein>
    <recommendedName>
        <fullName evidence="1">Large ribosomal subunit protein bL36</fullName>
    </recommendedName>
    <alternativeName>
        <fullName evidence="2">50S ribosomal protein L36</fullName>
    </alternativeName>
</protein>